<sequence length="163" mass="18924">MASVSEHCLNEIKPTILKCDKNKDRQYSIDEIVQLLKKNSKNPERLAVLLFKSLNKKLDESICFNDIDDREISKNCDKFQDKPEIDIESFLLRFDKNNDKMISHHELKTKLDELGCGNSKKTTDYVFEQIDTNKEGSLSYEDLEGFVKFLKQDNNKKTSLPSV</sequence>
<feature type="chain" id="PRO_0000323772" description="Calcium-binding protein I">
    <location>
        <begin position="1"/>
        <end position="163"/>
    </location>
</feature>
<feature type="domain" description="EF-hand 1" evidence="1">
    <location>
        <begin position="20"/>
        <end position="42"/>
    </location>
</feature>
<feature type="domain" description="EF-hand 2" evidence="1">
    <location>
        <begin position="82"/>
        <end position="117"/>
    </location>
</feature>
<feature type="domain" description="EF-hand 3" evidence="1">
    <location>
        <begin position="118"/>
        <end position="153"/>
    </location>
</feature>
<feature type="binding site" evidence="1">
    <location>
        <position position="95"/>
    </location>
    <ligand>
        <name>Ca(2+)</name>
        <dbReference type="ChEBI" id="CHEBI:29108"/>
        <label>1</label>
    </ligand>
</feature>
<feature type="binding site" evidence="1">
    <location>
        <position position="97"/>
    </location>
    <ligand>
        <name>Ca(2+)</name>
        <dbReference type="ChEBI" id="CHEBI:29108"/>
        <label>1</label>
    </ligand>
</feature>
<feature type="binding site" evidence="1">
    <location>
        <position position="99"/>
    </location>
    <ligand>
        <name>Ca(2+)</name>
        <dbReference type="ChEBI" id="CHEBI:29108"/>
        <label>1</label>
    </ligand>
</feature>
<feature type="binding site" evidence="1">
    <location>
        <position position="101"/>
    </location>
    <ligand>
        <name>Ca(2+)</name>
        <dbReference type="ChEBI" id="CHEBI:29108"/>
        <label>1</label>
    </ligand>
</feature>
<feature type="binding site" evidence="1">
    <location>
        <position position="106"/>
    </location>
    <ligand>
        <name>Ca(2+)</name>
        <dbReference type="ChEBI" id="CHEBI:29108"/>
        <label>1</label>
    </ligand>
</feature>
<feature type="binding site" evidence="1">
    <location>
        <position position="131"/>
    </location>
    <ligand>
        <name>Ca(2+)</name>
        <dbReference type="ChEBI" id="CHEBI:29108"/>
        <label>2</label>
    </ligand>
</feature>
<feature type="binding site" evidence="1">
    <location>
        <position position="133"/>
    </location>
    <ligand>
        <name>Ca(2+)</name>
        <dbReference type="ChEBI" id="CHEBI:29108"/>
        <label>2</label>
    </ligand>
</feature>
<feature type="binding site" evidence="1">
    <location>
        <position position="135"/>
    </location>
    <ligand>
        <name>Ca(2+)</name>
        <dbReference type="ChEBI" id="CHEBI:29108"/>
        <label>2</label>
    </ligand>
</feature>
<feature type="binding site" evidence="1">
    <location>
        <position position="137"/>
    </location>
    <ligand>
        <name>Ca(2+)</name>
        <dbReference type="ChEBI" id="CHEBI:29108"/>
        <label>2</label>
    </ligand>
</feature>
<feature type="binding site" evidence="1">
    <location>
        <position position="142"/>
    </location>
    <ligand>
        <name>Ca(2+)</name>
        <dbReference type="ChEBI" id="CHEBI:29108"/>
        <label>2</label>
    </ligand>
</feature>
<proteinExistence type="evidence at protein level"/>
<comment type="miscellaneous">
    <text>Does not bind calcium in vitro.</text>
</comment>
<protein>
    <recommendedName>
        <fullName>Calcium-binding protein I</fullName>
    </recommendedName>
    <alternativeName>
        <fullName>Calcium-binding protein 9</fullName>
    </alternativeName>
</protein>
<reference key="1">
    <citation type="journal article" date="2003" name="Dev. Growth Differ.">
        <title>Identification and characterization of novel calcium-binding proteins of Dictyostelium and their spatial expression patterns during development.</title>
        <authorList>
            <person name="Sakamoto H."/>
            <person name="Nishio K."/>
            <person name="Tomisako M."/>
            <person name="Kuwayama H."/>
            <person name="Tanaka Y."/>
            <person name="Suetake I."/>
            <person name="Tajima S."/>
            <person name="Ogihara S."/>
            <person name="Coukell B."/>
            <person name="Maeda M."/>
        </authorList>
    </citation>
    <scope>NUCLEOTIDE SEQUENCE [MRNA]</scope>
    <scope>LACK OF CALCIUM-BINDING</scope>
    <source>
        <strain>AX4</strain>
    </source>
</reference>
<reference key="2">
    <citation type="journal article" date="2002" name="Nature">
        <title>Sequence and analysis of chromosome 2 of Dictyostelium discoideum.</title>
        <authorList>
            <person name="Gloeckner G."/>
            <person name="Eichinger L."/>
            <person name="Szafranski K."/>
            <person name="Pachebat J.A."/>
            <person name="Bankier A.T."/>
            <person name="Dear P.H."/>
            <person name="Lehmann R."/>
            <person name="Baumgart C."/>
            <person name="Parra G."/>
            <person name="Abril J.F."/>
            <person name="Guigo R."/>
            <person name="Kumpf K."/>
            <person name="Tunggal B."/>
            <person name="Cox E.C."/>
            <person name="Quail M.A."/>
            <person name="Platzer M."/>
            <person name="Rosenthal A."/>
            <person name="Noegel A.A."/>
        </authorList>
    </citation>
    <scope>NUCLEOTIDE SEQUENCE [LARGE SCALE GENOMIC DNA]</scope>
    <source>
        <strain>AX4</strain>
    </source>
</reference>
<reference key="3">
    <citation type="journal article" date="2005" name="Nature">
        <title>The genome of the social amoeba Dictyostelium discoideum.</title>
        <authorList>
            <person name="Eichinger L."/>
            <person name="Pachebat J.A."/>
            <person name="Gloeckner G."/>
            <person name="Rajandream M.A."/>
            <person name="Sucgang R."/>
            <person name="Berriman M."/>
            <person name="Song J."/>
            <person name="Olsen R."/>
            <person name="Szafranski K."/>
            <person name="Xu Q."/>
            <person name="Tunggal B."/>
            <person name="Kummerfeld S."/>
            <person name="Madera M."/>
            <person name="Konfortov B.A."/>
            <person name="Rivero F."/>
            <person name="Bankier A.T."/>
            <person name="Lehmann R."/>
            <person name="Hamlin N."/>
            <person name="Davies R."/>
            <person name="Gaudet P."/>
            <person name="Fey P."/>
            <person name="Pilcher K."/>
            <person name="Chen G."/>
            <person name="Saunders D."/>
            <person name="Sodergren E.J."/>
            <person name="Davis P."/>
            <person name="Kerhornou A."/>
            <person name="Nie X."/>
            <person name="Hall N."/>
            <person name="Anjard C."/>
            <person name="Hemphill L."/>
            <person name="Bason N."/>
            <person name="Farbrother P."/>
            <person name="Desany B."/>
            <person name="Just E."/>
            <person name="Morio T."/>
            <person name="Rost R."/>
            <person name="Churcher C.M."/>
            <person name="Cooper J."/>
            <person name="Haydock S."/>
            <person name="van Driessche N."/>
            <person name="Cronin A."/>
            <person name="Goodhead I."/>
            <person name="Muzny D.M."/>
            <person name="Mourier T."/>
            <person name="Pain A."/>
            <person name="Lu M."/>
            <person name="Harper D."/>
            <person name="Lindsay R."/>
            <person name="Hauser H."/>
            <person name="James K.D."/>
            <person name="Quiles M."/>
            <person name="Madan Babu M."/>
            <person name="Saito T."/>
            <person name="Buchrieser C."/>
            <person name="Wardroper A."/>
            <person name="Felder M."/>
            <person name="Thangavelu M."/>
            <person name="Johnson D."/>
            <person name="Knights A."/>
            <person name="Loulseged H."/>
            <person name="Mungall K.L."/>
            <person name="Oliver K."/>
            <person name="Price C."/>
            <person name="Quail M.A."/>
            <person name="Urushihara H."/>
            <person name="Hernandez J."/>
            <person name="Rabbinowitsch E."/>
            <person name="Steffen D."/>
            <person name="Sanders M."/>
            <person name="Ma J."/>
            <person name="Kohara Y."/>
            <person name="Sharp S."/>
            <person name="Simmonds M.N."/>
            <person name="Spiegler S."/>
            <person name="Tivey A."/>
            <person name="Sugano S."/>
            <person name="White B."/>
            <person name="Walker D."/>
            <person name="Woodward J.R."/>
            <person name="Winckler T."/>
            <person name="Tanaka Y."/>
            <person name="Shaulsky G."/>
            <person name="Schleicher M."/>
            <person name="Weinstock G.M."/>
            <person name="Rosenthal A."/>
            <person name="Cox E.C."/>
            <person name="Chisholm R.L."/>
            <person name="Gibbs R.A."/>
            <person name="Loomis W.F."/>
            <person name="Platzer M."/>
            <person name="Kay R.R."/>
            <person name="Williams J.G."/>
            <person name="Dear P.H."/>
            <person name="Noegel A.A."/>
            <person name="Barrell B.G."/>
            <person name="Kuspa A."/>
        </authorList>
    </citation>
    <scope>NUCLEOTIDE SEQUENCE [LARGE SCALE GENOMIC DNA]</scope>
    <source>
        <strain>AX4</strain>
    </source>
</reference>
<evidence type="ECO:0000255" key="1">
    <source>
        <dbReference type="PROSITE-ProRule" id="PRU00448"/>
    </source>
</evidence>
<gene>
    <name type="primary">cbpI</name>
    <name type="synonym">cbp9</name>
    <name type="ORF">DDB_G0272827</name>
</gene>
<name>CBPI_DICDI</name>
<keyword id="KW-0106">Calcium</keyword>
<keyword id="KW-0479">Metal-binding</keyword>
<keyword id="KW-1185">Reference proteome</keyword>
<keyword id="KW-0677">Repeat</keyword>
<organism>
    <name type="scientific">Dictyostelium discoideum</name>
    <name type="common">Social amoeba</name>
    <dbReference type="NCBI Taxonomy" id="44689"/>
    <lineage>
        <taxon>Eukaryota</taxon>
        <taxon>Amoebozoa</taxon>
        <taxon>Evosea</taxon>
        <taxon>Eumycetozoa</taxon>
        <taxon>Dictyostelia</taxon>
        <taxon>Dictyosteliales</taxon>
        <taxon>Dictyosteliaceae</taxon>
        <taxon>Dictyostelium</taxon>
    </lineage>
</organism>
<dbReference type="EMBL" id="AB070450">
    <property type="protein sequence ID" value="BAB63908.1"/>
    <property type="molecule type" value="mRNA"/>
</dbReference>
<dbReference type="EMBL" id="AAFI02000008">
    <property type="protein sequence ID" value="EAL71051.1"/>
    <property type="molecule type" value="Genomic_DNA"/>
</dbReference>
<dbReference type="RefSeq" id="XP_644921.1">
    <property type="nucleotide sequence ID" value="XM_639829.1"/>
</dbReference>
<dbReference type="SMR" id="Q966R0"/>
<dbReference type="STRING" id="44689.Q966R0"/>
<dbReference type="PaxDb" id="44689-DDB0185027"/>
<dbReference type="EnsemblProtists" id="EAL71051">
    <property type="protein sequence ID" value="EAL71051"/>
    <property type="gene ID" value="DDB_G0272827"/>
</dbReference>
<dbReference type="GeneID" id="8618600"/>
<dbReference type="KEGG" id="ddi:DDB_G0272827"/>
<dbReference type="dictyBase" id="DDB_G0272827">
    <property type="gene designation" value="cbpI"/>
</dbReference>
<dbReference type="VEuPathDB" id="AmoebaDB:DDB_G0272827"/>
<dbReference type="HOGENOM" id="CLU_1630084_0_0_1"/>
<dbReference type="InParanoid" id="Q966R0"/>
<dbReference type="PhylomeDB" id="Q966R0"/>
<dbReference type="PRO" id="PR:Q966R0"/>
<dbReference type="Proteomes" id="UP000002195">
    <property type="component" value="Chromosome 2"/>
</dbReference>
<dbReference type="GO" id="GO:0005509">
    <property type="term" value="F:calcium ion binding"/>
    <property type="evidence" value="ECO:0007669"/>
    <property type="project" value="InterPro"/>
</dbReference>
<dbReference type="Gene3D" id="1.10.238.10">
    <property type="entry name" value="EF-hand"/>
    <property type="match status" value="1"/>
</dbReference>
<dbReference type="InterPro" id="IPR011992">
    <property type="entry name" value="EF-hand-dom_pair"/>
</dbReference>
<dbReference type="InterPro" id="IPR018247">
    <property type="entry name" value="EF_Hand_1_Ca_BS"/>
</dbReference>
<dbReference type="InterPro" id="IPR002048">
    <property type="entry name" value="EF_hand_dom"/>
</dbReference>
<dbReference type="Pfam" id="PF13499">
    <property type="entry name" value="EF-hand_7"/>
    <property type="match status" value="1"/>
</dbReference>
<dbReference type="SUPFAM" id="SSF47473">
    <property type="entry name" value="EF-hand"/>
    <property type="match status" value="1"/>
</dbReference>
<dbReference type="PROSITE" id="PS00018">
    <property type="entry name" value="EF_HAND_1"/>
    <property type="match status" value="2"/>
</dbReference>
<dbReference type="PROSITE" id="PS50222">
    <property type="entry name" value="EF_HAND_2"/>
    <property type="match status" value="3"/>
</dbReference>
<accession>Q966R0</accession>
<accession>Q558Z5</accession>